<gene>
    <name evidence="1" type="primary">argE</name>
    <name type="ordered locus">plu4745</name>
</gene>
<accession>Q7MYD5</accession>
<reference key="1">
    <citation type="journal article" date="2003" name="Nat. Biotechnol.">
        <title>The genome sequence of the entomopathogenic bacterium Photorhabdus luminescens.</title>
        <authorList>
            <person name="Duchaud E."/>
            <person name="Rusniok C."/>
            <person name="Frangeul L."/>
            <person name="Buchrieser C."/>
            <person name="Givaudan A."/>
            <person name="Taourit S."/>
            <person name="Bocs S."/>
            <person name="Boursaux-Eude C."/>
            <person name="Chandler M."/>
            <person name="Charles J.-F."/>
            <person name="Dassa E."/>
            <person name="Derose R."/>
            <person name="Derzelle S."/>
            <person name="Freyssinet G."/>
            <person name="Gaudriault S."/>
            <person name="Medigue C."/>
            <person name="Lanois A."/>
            <person name="Powell K."/>
            <person name="Siguier P."/>
            <person name="Vincent R."/>
            <person name="Wingate V."/>
            <person name="Zouine M."/>
            <person name="Glaser P."/>
            <person name="Boemare N."/>
            <person name="Danchin A."/>
            <person name="Kunst F."/>
        </authorList>
    </citation>
    <scope>NUCLEOTIDE SEQUENCE [LARGE SCALE GENOMIC DNA]</scope>
    <source>
        <strain>DSM 15139 / CIP 105565 / TT01</strain>
    </source>
</reference>
<feature type="chain" id="PRO_0000185247" description="Acetylornithine deacetylase">
    <location>
        <begin position="1"/>
        <end position="385"/>
    </location>
</feature>
<feature type="active site" evidence="1">
    <location>
        <position position="82"/>
    </location>
</feature>
<feature type="active site" description="Proton acceptor" evidence="1">
    <location>
        <position position="144"/>
    </location>
</feature>
<feature type="binding site" evidence="1">
    <location>
        <position position="80"/>
    </location>
    <ligand>
        <name>Zn(2+)</name>
        <dbReference type="ChEBI" id="CHEBI:29105"/>
        <label>1</label>
    </ligand>
</feature>
<feature type="binding site" evidence="1">
    <location>
        <position position="112"/>
    </location>
    <ligand>
        <name>Zn(2+)</name>
        <dbReference type="ChEBI" id="CHEBI:29105"/>
        <label>1</label>
    </ligand>
</feature>
<feature type="binding site" evidence="1">
    <location>
        <position position="112"/>
    </location>
    <ligand>
        <name>Zn(2+)</name>
        <dbReference type="ChEBI" id="CHEBI:29105"/>
        <label>2</label>
    </ligand>
</feature>
<feature type="binding site" evidence="1">
    <location>
        <position position="145"/>
    </location>
    <ligand>
        <name>Zn(2+)</name>
        <dbReference type="ChEBI" id="CHEBI:29105"/>
        <label>2</label>
    </ligand>
</feature>
<feature type="binding site" evidence="1">
    <location>
        <position position="169"/>
    </location>
    <ligand>
        <name>Zn(2+)</name>
        <dbReference type="ChEBI" id="CHEBI:29105"/>
        <label>1</label>
    </ligand>
</feature>
<feature type="binding site" evidence="1">
    <location>
        <position position="355"/>
    </location>
    <ligand>
        <name>Zn(2+)</name>
        <dbReference type="ChEBI" id="CHEBI:29105"/>
        <label>2</label>
    </ligand>
</feature>
<evidence type="ECO:0000255" key="1">
    <source>
        <dbReference type="HAMAP-Rule" id="MF_01108"/>
    </source>
</evidence>
<sequence length="385" mass="42701">MNIKLPPFIELFRQLIATPSISATDISIDQSNESLINLLASWLKEIGFEIEIQPVPETLGKYNLLATLGRGPGGLLLCGHTDTVPFDEGLWTKDPFTLTERDNKLYGLGTADMKGFFAFIIDALRDIDVSKITRPLYILATADEETTMAGARYFAASTTIRPDFAIIGEPTSLHPICAHKGHLSNAIRIVGQSGHSSDPDRGINAIDLMHESIGHLIELRNTLKEHYNNPAFTIPYPTMNFGYIHGGDAVNRICAHCELHMDIRPLPGLTLQDLNGLLNEALEPMKQRWPGRLTIDELHSPIPGYECPTDHKMVDVIEKLLGRKAETVNYCTEAPFIQKVCPTLVLGPGSIEQAHQPDEFIDMSFIGPTRKIISQLIDHFCLSNN</sequence>
<keyword id="KW-0028">Amino-acid biosynthesis</keyword>
<keyword id="KW-0055">Arginine biosynthesis</keyword>
<keyword id="KW-0170">Cobalt</keyword>
<keyword id="KW-0963">Cytoplasm</keyword>
<keyword id="KW-0378">Hydrolase</keyword>
<keyword id="KW-0479">Metal-binding</keyword>
<keyword id="KW-1185">Reference proteome</keyword>
<keyword id="KW-0862">Zinc</keyword>
<name>ARGE_PHOLL</name>
<dbReference type="EC" id="3.5.1.16" evidence="1"/>
<dbReference type="EMBL" id="BX571874">
    <property type="protein sequence ID" value="CAE17117.1"/>
    <property type="molecule type" value="Genomic_DNA"/>
</dbReference>
<dbReference type="RefSeq" id="WP_011148813.1">
    <property type="nucleotide sequence ID" value="NC_005126.1"/>
</dbReference>
<dbReference type="SMR" id="Q7MYD5"/>
<dbReference type="STRING" id="243265.plu4745"/>
<dbReference type="MEROPS" id="M20.974"/>
<dbReference type="GeneID" id="48850980"/>
<dbReference type="KEGG" id="plu:plu4745"/>
<dbReference type="eggNOG" id="COG0624">
    <property type="taxonomic scope" value="Bacteria"/>
</dbReference>
<dbReference type="HOGENOM" id="CLU_021802_2_4_6"/>
<dbReference type="OrthoDB" id="3665926at2"/>
<dbReference type="UniPathway" id="UPA00068">
    <property type="reaction ID" value="UER00110"/>
</dbReference>
<dbReference type="Proteomes" id="UP000002514">
    <property type="component" value="Chromosome"/>
</dbReference>
<dbReference type="GO" id="GO:0005737">
    <property type="term" value="C:cytoplasm"/>
    <property type="evidence" value="ECO:0007669"/>
    <property type="project" value="UniProtKB-SubCell"/>
</dbReference>
<dbReference type="GO" id="GO:0008777">
    <property type="term" value="F:acetylornithine deacetylase activity"/>
    <property type="evidence" value="ECO:0007669"/>
    <property type="project" value="UniProtKB-UniRule"/>
</dbReference>
<dbReference type="GO" id="GO:0008270">
    <property type="term" value="F:zinc ion binding"/>
    <property type="evidence" value="ECO:0007669"/>
    <property type="project" value="UniProtKB-UniRule"/>
</dbReference>
<dbReference type="GO" id="GO:0006526">
    <property type="term" value="P:L-arginine biosynthetic process"/>
    <property type="evidence" value="ECO:0007669"/>
    <property type="project" value="UniProtKB-UniRule"/>
</dbReference>
<dbReference type="CDD" id="cd03894">
    <property type="entry name" value="M20_ArgE"/>
    <property type="match status" value="1"/>
</dbReference>
<dbReference type="FunFam" id="3.30.70.360:FF:000003">
    <property type="entry name" value="Acetylornithine deacetylase"/>
    <property type="match status" value="1"/>
</dbReference>
<dbReference type="Gene3D" id="3.30.70.360">
    <property type="match status" value="1"/>
</dbReference>
<dbReference type="Gene3D" id="3.40.630.10">
    <property type="entry name" value="Zn peptidases"/>
    <property type="match status" value="1"/>
</dbReference>
<dbReference type="HAMAP" id="MF_01108">
    <property type="entry name" value="ArgE"/>
    <property type="match status" value="1"/>
</dbReference>
<dbReference type="InterPro" id="IPR010169">
    <property type="entry name" value="AcOrn-deacetyl"/>
</dbReference>
<dbReference type="InterPro" id="IPR001261">
    <property type="entry name" value="ArgE/DapE_CS"/>
</dbReference>
<dbReference type="InterPro" id="IPR036264">
    <property type="entry name" value="Bact_exopeptidase_dim_dom"/>
</dbReference>
<dbReference type="InterPro" id="IPR002933">
    <property type="entry name" value="Peptidase_M20"/>
</dbReference>
<dbReference type="InterPro" id="IPR011650">
    <property type="entry name" value="Peptidase_M20_dimer"/>
</dbReference>
<dbReference type="InterPro" id="IPR050072">
    <property type="entry name" value="Peptidase_M20A"/>
</dbReference>
<dbReference type="NCBIfam" id="TIGR01892">
    <property type="entry name" value="AcOrn-deacetyl"/>
    <property type="match status" value="1"/>
</dbReference>
<dbReference type="NCBIfam" id="NF003474">
    <property type="entry name" value="PRK05111.1"/>
    <property type="match status" value="1"/>
</dbReference>
<dbReference type="PANTHER" id="PTHR43808">
    <property type="entry name" value="ACETYLORNITHINE DEACETYLASE"/>
    <property type="match status" value="1"/>
</dbReference>
<dbReference type="PANTHER" id="PTHR43808:SF1">
    <property type="entry name" value="ACETYLORNITHINE DEACETYLASE"/>
    <property type="match status" value="1"/>
</dbReference>
<dbReference type="Pfam" id="PF07687">
    <property type="entry name" value="M20_dimer"/>
    <property type="match status" value="1"/>
</dbReference>
<dbReference type="Pfam" id="PF01546">
    <property type="entry name" value="Peptidase_M20"/>
    <property type="match status" value="1"/>
</dbReference>
<dbReference type="SUPFAM" id="SSF55031">
    <property type="entry name" value="Bacterial exopeptidase dimerisation domain"/>
    <property type="match status" value="1"/>
</dbReference>
<dbReference type="SUPFAM" id="SSF53187">
    <property type="entry name" value="Zn-dependent exopeptidases"/>
    <property type="match status" value="1"/>
</dbReference>
<dbReference type="PROSITE" id="PS00758">
    <property type="entry name" value="ARGE_DAPE_CPG2_1"/>
    <property type="match status" value="1"/>
</dbReference>
<dbReference type="PROSITE" id="PS00759">
    <property type="entry name" value="ARGE_DAPE_CPG2_2"/>
    <property type="match status" value="1"/>
</dbReference>
<comment type="function">
    <text evidence="1">Catalyzes the hydrolysis of the amide bond of N(2)-acetylated L-amino acids. Cleaves the acetyl group from N-acetyl-L-ornithine to form L-ornithine, an intermediate in L-arginine biosynthesis pathway, and a branchpoint in the synthesis of polyamines.</text>
</comment>
<comment type="catalytic activity">
    <reaction evidence="1">
        <text>N(2)-acetyl-L-ornithine + H2O = L-ornithine + acetate</text>
        <dbReference type="Rhea" id="RHEA:15941"/>
        <dbReference type="ChEBI" id="CHEBI:15377"/>
        <dbReference type="ChEBI" id="CHEBI:30089"/>
        <dbReference type="ChEBI" id="CHEBI:46911"/>
        <dbReference type="ChEBI" id="CHEBI:57805"/>
        <dbReference type="EC" id="3.5.1.16"/>
    </reaction>
</comment>
<comment type="cofactor">
    <cofactor evidence="1">
        <name>Zn(2+)</name>
        <dbReference type="ChEBI" id="CHEBI:29105"/>
    </cofactor>
    <cofactor evidence="1">
        <name>Co(2+)</name>
        <dbReference type="ChEBI" id="CHEBI:48828"/>
    </cofactor>
    <text evidence="1">Binds 2 Zn(2+) or Co(2+) ions per subunit.</text>
</comment>
<comment type="cofactor">
    <cofactor evidence="1">
        <name>glutathione</name>
        <dbReference type="ChEBI" id="CHEBI:57925"/>
    </cofactor>
</comment>
<comment type="pathway">
    <text evidence="1">Amino-acid biosynthesis; L-arginine biosynthesis; L-ornithine from N(2)-acetyl-L-ornithine (linear): step 1/1.</text>
</comment>
<comment type="subunit">
    <text evidence="1">Homodimer.</text>
</comment>
<comment type="subcellular location">
    <subcellularLocation>
        <location evidence="1">Cytoplasm</location>
    </subcellularLocation>
</comment>
<comment type="similarity">
    <text evidence="1">Belongs to the peptidase M20A family. ArgE subfamily.</text>
</comment>
<proteinExistence type="inferred from homology"/>
<protein>
    <recommendedName>
        <fullName evidence="1">Acetylornithine deacetylase</fullName>
        <shortName evidence="1">AO</shortName>
        <shortName evidence="1">Acetylornithinase</shortName>
        <ecNumber evidence="1">3.5.1.16</ecNumber>
    </recommendedName>
    <alternativeName>
        <fullName evidence="1">N-acetylornithinase</fullName>
        <shortName evidence="1">NAO</shortName>
    </alternativeName>
</protein>
<organism>
    <name type="scientific">Photorhabdus laumondii subsp. laumondii (strain DSM 15139 / CIP 105565 / TT01)</name>
    <name type="common">Photorhabdus luminescens subsp. laumondii</name>
    <dbReference type="NCBI Taxonomy" id="243265"/>
    <lineage>
        <taxon>Bacteria</taxon>
        <taxon>Pseudomonadati</taxon>
        <taxon>Pseudomonadota</taxon>
        <taxon>Gammaproteobacteria</taxon>
        <taxon>Enterobacterales</taxon>
        <taxon>Morganellaceae</taxon>
        <taxon>Photorhabdus</taxon>
    </lineage>
</organism>